<proteinExistence type="inferred from homology"/>
<reference key="1">
    <citation type="journal article" date="1989" name="Nucleic Acids Res.">
        <title>Nucleotide sequence of capsid, E2 and E1 protein genes of Rubella virus vaccine strain RA27/3.</title>
        <authorList>
            <person name="Nakhasi H.L."/>
            <person name="Thomas D."/>
            <person name="Zheng D."/>
            <person name="Liu T.Y."/>
        </authorList>
    </citation>
    <scope>NUCLEOTIDE SEQUENCE [GENOMIC RNA]</scope>
</reference>
<reference key="2">
    <citation type="journal article" date="1997" name="Arch. Virol.">
        <title>Genomic sequence of the RA27/3 vaccine strain of rubella virus.</title>
        <authorList>
            <person name="Pugachev K.V."/>
            <person name="Abernathy E.S."/>
            <person name="Frey T.K."/>
        </authorList>
    </citation>
    <scope>NUCLEOTIDE SEQUENCE [GENOMIC RNA]</scope>
</reference>
<protein>
    <recommendedName>
        <fullName>Structural polyprotein</fullName>
    </recommendedName>
    <alternativeName>
        <fullName>p110</fullName>
    </alternativeName>
    <component>
        <recommendedName>
            <fullName>Capsid protein</fullName>
        </recommendedName>
        <alternativeName>
            <fullName>Coat protein</fullName>
            <shortName>C</shortName>
        </alternativeName>
    </component>
    <component>
        <recommendedName>
            <fullName>Spike glycoprotein E2</fullName>
        </recommendedName>
        <alternativeName>
            <fullName>E2 envelope glycoprotein</fullName>
        </alternativeName>
    </component>
    <component>
        <recommendedName>
            <fullName>Spike glycoprotein E1</fullName>
        </recommendedName>
        <alternativeName>
            <fullName>E1 envelope glycoprotein</fullName>
        </alternativeName>
    </component>
</protein>
<feature type="chain" id="PRO_0000041305" description="Capsid protein">
    <location>
        <begin position="1"/>
        <end position="300"/>
    </location>
</feature>
<feature type="chain" id="PRO_0000041306" description="Spike glycoprotein E2">
    <location>
        <begin position="301"/>
        <end position="582"/>
    </location>
</feature>
<feature type="chain" id="PRO_0000041307" description="Spike glycoprotein E1">
    <location>
        <begin position="583"/>
        <end position="1063"/>
    </location>
</feature>
<feature type="topological domain" description="Extracellular" evidence="4">
    <location>
        <begin position="301"/>
        <end position="534"/>
    </location>
</feature>
<feature type="transmembrane region" description="Helical; Note=Golgi retention signal" evidence="3">
    <location>
        <begin position="535"/>
        <end position="555"/>
    </location>
</feature>
<feature type="topological domain" description="Cytoplasmic" evidence="4">
    <location>
        <begin position="556"/>
        <end position="582"/>
    </location>
</feature>
<feature type="topological domain" description="Extracellular" evidence="4">
    <location>
        <begin position="583"/>
        <end position="1028"/>
    </location>
</feature>
<feature type="transmembrane region" description="Helical; Note=Endoplasmic reticulum retention signal" evidence="3">
    <location>
        <begin position="1029"/>
        <end position="1049"/>
    </location>
</feature>
<feature type="topological domain" description="Extracellular" evidence="4">
    <location>
        <begin position="1050"/>
        <end position="1063"/>
    </location>
</feature>
<feature type="region of interest" description="Disordered" evidence="5">
    <location>
        <begin position="1"/>
        <end position="131"/>
    </location>
</feature>
<feature type="region of interest" description="Human C1QBP/SF2P32-binding" evidence="3">
    <location>
        <begin position="30"/>
        <end position="69"/>
    </location>
</feature>
<feature type="region of interest" description="Functions as E2 signal peptide" evidence="3">
    <location>
        <begin position="279"/>
        <end position="300"/>
    </location>
</feature>
<feature type="region of interest" description="Functions as E1 signal peptide" evidence="3">
    <location>
        <begin position="563"/>
        <end position="582"/>
    </location>
</feature>
<feature type="compositionally biased region" description="Basic residues" evidence="5">
    <location>
        <begin position="59"/>
        <end position="69"/>
    </location>
</feature>
<feature type="compositionally biased region" description="Basic and acidic residues" evidence="5">
    <location>
        <begin position="70"/>
        <end position="87"/>
    </location>
</feature>
<feature type="compositionally biased region" description="Pro residues" evidence="5">
    <location>
        <begin position="93"/>
        <end position="107"/>
    </location>
</feature>
<feature type="binding site" evidence="3">
    <location>
        <position position="670"/>
    </location>
    <ligand>
        <name>Ca(2+)</name>
        <dbReference type="ChEBI" id="CHEBI:29108"/>
    </ligand>
</feature>
<feature type="binding site" evidence="3">
    <location>
        <position position="671"/>
    </location>
    <ligand>
        <name>Ca(2+)</name>
        <dbReference type="ChEBI" id="CHEBI:29108"/>
    </ligand>
</feature>
<feature type="binding site" evidence="3">
    <location>
        <position position="718"/>
    </location>
    <ligand>
        <name>Ca(2+)</name>
        <dbReference type="ChEBI" id="CHEBI:29108"/>
    </ligand>
</feature>
<feature type="binding site" evidence="3">
    <location>
        <position position="719"/>
    </location>
    <ligand>
        <name>Ca(2+)</name>
        <dbReference type="ChEBI" id="CHEBI:29108"/>
    </ligand>
</feature>
<feature type="site" description="Cleavage; by host signal peptidase" evidence="4">
    <location>
        <begin position="300"/>
        <end position="301"/>
    </location>
</feature>
<feature type="site" description="Cleavage; by host signal peptidase" evidence="4">
    <location>
        <begin position="582"/>
        <end position="583"/>
    </location>
</feature>
<feature type="modified residue" description="Phosphoserine; by host" evidence="3">
    <location>
        <position position="46"/>
    </location>
</feature>
<feature type="glycosylation site" description="N-linked (GlcNAc...) asparagine; by host" evidence="4">
    <location>
        <position position="353"/>
    </location>
</feature>
<feature type="glycosylation site" description="N-linked (GlcNAc...) asparagine; by host" evidence="4">
    <location>
        <position position="371"/>
    </location>
</feature>
<feature type="glycosylation site" description="N-linked (GlcNAc...) asparagine; by host" evidence="4">
    <location>
        <position position="410"/>
    </location>
</feature>
<feature type="glycosylation site" description="N-linked (GlcNAc...) asparagine; by host" evidence="4">
    <location>
        <position position="429"/>
    </location>
</feature>
<feature type="glycosylation site" description="N-linked (GlcNAc...) asparagine; by host" evidence="3">
    <location>
        <position position="658"/>
    </location>
</feature>
<feature type="glycosylation site" description="N-linked (GlcNAc...) asparagine; by host" evidence="3">
    <location>
        <position position="759"/>
    </location>
</feature>
<feature type="glycosylation site" description="N-linked (GlcNAc...) asparagine; by host" evidence="3">
    <location>
        <position position="791"/>
    </location>
</feature>
<feature type="glycosylation site" description="O-linked (GalNAc...) threonine; by host" evidence="3">
    <location>
        <position position="1011"/>
    </location>
</feature>
<feature type="glycosylation site" description="O-linked (GalNAc...) threonine; by host" evidence="3">
    <location>
        <position position="1012"/>
    </location>
</feature>
<feature type="disulfide bond" evidence="3">
    <location>
        <begin position="153"/>
        <end position="197"/>
    </location>
</feature>
<feature type="disulfide bond" evidence="2">
    <location>
        <begin position="590"/>
        <end position="595"/>
    </location>
</feature>
<feature type="disulfide bond" evidence="2">
    <location>
        <begin position="619"/>
        <end position="824"/>
    </location>
</feature>
<feature type="disulfide bond" evidence="2">
    <location>
        <begin position="641"/>
        <end position="653"/>
    </location>
</feature>
<feature type="disulfide bond" evidence="2">
    <location>
        <begin position="699"/>
        <end position="712"/>
    </location>
</feature>
<feature type="disulfide bond" evidence="2">
    <location>
        <begin position="758"/>
        <end position="767"/>
    </location>
</feature>
<feature type="disulfide bond" evidence="2">
    <location>
        <begin position="807"/>
        <end position="817"/>
    </location>
</feature>
<feature type="disulfide bond" evidence="2">
    <location>
        <begin position="931"/>
        <end position="934"/>
    </location>
</feature>
<feature type="disulfide bond" evidence="2">
    <location>
        <begin position="950"/>
        <end position="983"/>
    </location>
</feature>
<feature type="sequence conflict" description="In Ref. 1; CAA33016." evidence="6" ref="1">
    <original>A</original>
    <variation>V</variation>
    <location>
        <position position="22"/>
    </location>
</feature>
<feature type="sequence conflict" description="In Ref. 1; CAA33016." evidence="6" ref="1">
    <original>ELA</original>
    <variation>GLT</variation>
    <location>
        <begin position="26"/>
        <end position="28"/>
    </location>
</feature>
<feature type="sequence conflict" description="In Ref. 1; CAA33016." evidence="6" ref="1">
    <original>R</original>
    <variation>P</variation>
    <location>
        <position position="62"/>
    </location>
</feature>
<feature type="sequence conflict" description="In Ref. 1; CAA33016." evidence="6" ref="1">
    <original>S</original>
    <variation>T</variation>
    <location>
        <position position="254"/>
    </location>
</feature>
<feature type="sequence conflict" description="In Ref. 1; CAA33016." evidence="6" ref="1">
    <original>P</original>
    <variation>S</variation>
    <location>
        <position position="258"/>
    </location>
</feature>
<feature type="sequence conflict" description="In Ref. 1; CAA33016." evidence="6" ref="1">
    <original>WR</original>
    <variation>SS</variation>
    <location>
        <begin position="274"/>
        <end position="275"/>
    </location>
</feature>
<feature type="sequence conflict" description="In Ref. 1; CAA33016." evidence="6" ref="1">
    <original>A</original>
    <variation>V</variation>
    <location>
        <position position="306"/>
    </location>
</feature>
<feature type="sequence conflict" description="In Ref. 1; CAA33016." evidence="6" ref="1">
    <original>TL</original>
    <variation>MP</variation>
    <location>
        <begin position="313"/>
        <end position="314"/>
    </location>
</feature>
<feature type="sequence conflict" description="In Ref. 1; CAA33016." evidence="6" ref="1">
    <original>P</original>
    <variation>S</variation>
    <location>
        <position position="404"/>
    </location>
</feature>
<feature type="sequence conflict" description="In Ref. 1; CAA33016." evidence="6" ref="1">
    <original>C</original>
    <variation>Y</variation>
    <location>
        <position position="472"/>
    </location>
</feature>
<feature type="sequence conflict" description="In Ref. 1; CAA33016." evidence="6" ref="1">
    <original>L</original>
    <variation>F</variation>
    <location>
        <position position="539"/>
    </location>
</feature>
<feature type="sequence conflict" description="In Ref. 1; CAA33016." evidence="6" ref="1">
    <original>T</original>
    <variation>A</variation>
    <location>
        <position position="558"/>
    </location>
</feature>
<feature type="sequence conflict" description="In Ref. 1; CAA33016." evidence="6" ref="1">
    <original>E</original>
    <variation>Q</variation>
    <location>
        <position position="702"/>
    </location>
</feature>
<feature type="sequence conflict" description="In Ref. 1; CAA33016." evidence="6" ref="1">
    <original>P</original>
    <variation>L</variation>
    <location>
        <position position="779"/>
    </location>
</feature>
<feature type="sequence conflict" description="In Ref. 1; CAA33016." evidence="6" ref="1">
    <original>A</original>
    <variation>V</variation>
    <location>
        <position position="830"/>
    </location>
</feature>
<feature type="sequence conflict" description="In Ref. 1; CAA33016." evidence="6" ref="1">
    <original>T</original>
    <variation>S</variation>
    <location>
        <position position="893"/>
    </location>
</feature>
<feature type="sequence conflict" description="In Ref. 1; CAA33016." evidence="6" ref="1">
    <original>G</original>
    <variation>R</variation>
    <location>
        <position position="905"/>
    </location>
</feature>
<feature type="sequence conflict" description="In Ref. 1; CAA33016." evidence="6" ref="1">
    <original>T</original>
    <variation>A</variation>
    <location>
        <position position="919"/>
    </location>
</feature>
<keyword id="KW-0106">Calcium</keyword>
<keyword id="KW-0167">Capsid protein</keyword>
<keyword id="KW-1165">Clathrin-mediated endocytosis of virus by host</keyword>
<keyword id="KW-1015">Disulfide bond</keyword>
<keyword id="KW-1170">Fusion of virus membrane with host endosomal membrane</keyword>
<keyword id="KW-1168">Fusion of virus membrane with host membrane</keyword>
<keyword id="KW-0325">Glycoprotein</keyword>
<keyword id="KW-1035">Host cytoplasm</keyword>
<keyword id="KW-1040">Host Golgi apparatus</keyword>
<keyword id="KW-1043">Host membrane</keyword>
<keyword id="KW-1045">Host mitochondrion</keyword>
<keyword id="KW-0945">Host-virus interaction</keyword>
<keyword id="KW-0449">Lipoprotein</keyword>
<keyword id="KW-0472">Membrane</keyword>
<keyword id="KW-0479">Metal-binding</keyword>
<keyword id="KW-0564">Palmitate</keyword>
<keyword id="KW-0597">Phosphoprotein</keyword>
<keyword id="KW-0694">RNA-binding</keyword>
<keyword id="KW-1144">T=4 icosahedral capsid protein</keyword>
<keyword id="KW-0812">Transmembrane</keyword>
<keyword id="KW-1133">Transmembrane helix</keyword>
<keyword id="KW-1161">Viral attachment to host cell</keyword>
<keyword id="KW-0261">Viral envelope protein</keyword>
<keyword id="KW-1162">Viral penetration into host cytoplasm</keyword>
<keyword id="KW-0946">Virion</keyword>
<keyword id="KW-1164">Virus endocytosis by host</keyword>
<keyword id="KW-1160">Virus entry into host cell</keyword>
<organismHost>
    <name type="scientific">Homo sapiens</name>
    <name type="common">Human</name>
    <dbReference type="NCBI Taxonomy" id="9606"/>
</organismHost>
<sequence>MASTTPITMEDLQKALETQSRALRAELAAGASQSRRPRPPRQRDSSTTGDDSGRDSGGPRRRRGNRGRGQRRDWSRAPPPPEERQETRSQTPAPKPSRAPPQQPQPPRMQTGRGGSAPRPELGPPTNPFQAAVARGLRPPLHDPDTEAPTEACVTSWLWSEGEGAVFYRVDLHFTNLGTPPLDEDGRWDPALMYNPCGPEPPAHVVRAYNQPAGDVRGVWGKGERTYAEQDFRVGGTRWHRLLRMPVRGLDGDSAPLPPHTTERIETRSARHPWRIRFGAPQAFLAGLLLAAVAVGTARAGLQPRADMAAPPTLPQPPRAHGQHYGHHHHQLPFLGHDGHHGGTLRVGQHHRNASDVLPGHWLQGGWGCYNLSDWHQGTHVCHTKHMDFWCVEHDRPPPATPTPLTTAANSTTAATPATAPAPCHAGLNDSCGGFLSGCGPMRLRHGADTRCGRLICGLSTTAQYPPTRFGCAMRWGLPPWELVVLTARPEDGWTCRGVPAHPGTRCPELVSPMGRATCSPASALWLATANALSLDHALAAFVLLVPWVLIFMVCRRTCRRRGAAAALTAVVLQGYNPPAYGEEAFTYLCTAPGCATQAPVPVRLAGVRFESKIVDGGCFAPWDLEATGACICEIPTDVSCEGLGAWVPTAPCARIWNGTQRACTFWAVNAYSSGGYAQLASYFNPGGSYYKQYHPTACEVEPAFGHSDAACWGFPTDTVMSVFALASYVQHPHKTVRVKFHTETRTVWQLSVAGVSCNVTTEHPFCNTPHGQLEVQVPPDPGDLVEYIMNHTGNQQSRWGLGSPNCHGPDWASPVCQRHSPDCSRLVGATPERPRLRLVDADDPLLRTAPGPGEVWVTPVIGSQARKCGLHIRAGPYGHATVEMPEWIHAHTTSDPWHPPGPLGLKFKTVRPVALPRTLAPPRNVRVTGCYQCGTPALVEGLAPGGGNCHLTVNGEDLGAFPPGKFVTAALLNTPPPYQVSCGGESDRASARVIDPAAQSFTGVVYGTHTTAVSETRQTWAEWAAAHWWQLTLGAICALLLAGLLACCAKCLYYLRGAIAPR</sequence>
<evidence type="ECO:0000250" key="1"/>
<evidence type="ECO:0000250" key="2">
    <source>
        <dbReference type="UniProtKB" id="P07566"/>
    </source>
</evidence>
<evidence type="ECO:0000250" key="3">
    <source>
        <dbReference type="UniProtKB" id="P08563"/>
    </source>
</evidence>
<evidence type="ECO:0000255" key="4"/>
<evidence type="ECO:0000256" key="5">
    <source>
        <dbReference type="SAM" id="MobiDB-lite"/>
    </source>
</evidence>
<evidence type="ECO:0000305" key="6"/>
<dbReference type="EMBL" id="X14871">
    <property type="protein sequence ID" value="CAA33016.1"/>
    <property type="status" value="ALT_SEQ"/>
    <property type="molecule type" value="Genomic_RNA"/>
</dbReference>
<dbReference type="EMBL" id="L78917">
    <property type="protein sequence ID" value="AAB81188.1"/>
    <property type="molecule type" value="Genomic_RNA"/>
</dbReference>
<dbReference type="PIR" id="S04800">
    <property type="entry name" value="GNWVRA"/>
</dbReference>
<dbReference type="SMR" id="P19725"/>
<dbReference type="IntAct" id="P19725">
    <property type="interactions" value="2"/>
</dbReference>
<dbReference type="Proteomes" id="UP000007188">
    <property type="component" value="Genome"/>
</dbReference>
<dbReference type="GO" id="GO:0044178">
    <property type="term" value="C:host cell Golgi membrane"/>
    <property type="evidence" value="ECO:0007669"/>
    <property type="project" value="UniProtKB-SubCell"/>
</dbReference>
<dbReference type="GO" id="GO:0033650">
    <property type="term" value="C:host cell mitochondrion"/>
    <property type="evidence" value="ECO:0007669"/>
    <property type="project" value="UniProtKB-SubCell"/>
</dbReference>
<dbReference type="GO" id="GO:0016020">
    <property type="term" value="C:membrane"/>
    <property type="evidence" value="ECO:0007669"/>
    <property type="project" value="UniProtKB-KW"/>
</dbReference>
<dbReference type="GO" id="GO:0039619">
    <property type="term" value="C:T=4 icosahedral viral capsid"/>
    <property type="evidence" value="ECO:0007669"/>
    <property type="project" value="UniProtKB-KW"/>
</dbReference>
<dbReference type="GO" id="GO:0019031">
    <property type="term" value="C:viral envelope"/>
    <property type="evidence" value="ECO:0007669"/>
    <property type="project" value="UniProtKB-KW"/>
</dbReference>
<dbReference type="GO" id="GO:0019013">
    <property type="term" value="C:viral nucleocapsid"/>
    <property type="evidence" value="ECO:0007669"/>
    <property type="project" value="InterPro"/>
</dbReference>
<dbReference type="GO" id="GO:0055036">
    <property type="term" value="C:virion membrane"/>
    <property type="evidence" value="ECO:0007669"/>
    <property type="project" value="UniProtKB-SubCell"/>
</dbReference>
<dbReference type="GO" id="GO:0046872">
    <property type="term" value="F:metal ion binding"/>
    <property type="evidence" value="ECO:0007669"/>
    <property type="project" value="UniProtKB-KW"/>
</dbReference>
<dbReference type="GO" id="GO:0003723">
    <property type="term" value="F:RNA binding"/>
    <property type="evidence" value="ECO:0007669"/>
    <property type="project" value="UniProtKB-KW"/>
</dbReference>
<dbReference type="GO" id="GO:0075512">
    <property type="term" value="P:clathrin-dependent endocytosis of virus by host cell"/>
    <property type="evidence" value="ECO:0007669"/>
    <property type="project" value="UniProtKB-KW"/>
</dbReference>
<dbReference type="GO" id="GO:0039654">
    <property type="term" value="P:fusion of virus membrane with host endosome membrane"/>
    <property type="evidence" value="ECO:0007669"/>
    <property type="project" value="UniProtKB-KW"/>
</dbReference>
<dbReference type="GO" id="GO:0019062">
    <property type="term" value="P:virion attachment to host cell"/>
    <property type="evidence" value="ECO:0007669"/>
    <property type="project" value="UniProtKB-KW"/>
</dbReference>
<dbReference type="Gene3D" id="2.60.98.30">
    <property type="entry name" value="Rubella membrane glycoprotein E1, domain 1"/>
    <property type="match status" value="1"/>
</dbReference>
<dbReference type="Gene3D" id="3.30.67.20">
    <property type="entry name" value="Rubella membrane glycoprotein E1, domain 2"/>
    <property type="match status" value="2"/>
</dbReference>
<dbReference type="Gene3D" id="2.60.40.2650">
    <property type="entry name" value="Rubella membrane glycoprotein E1, domain 3"/>
    <property type="match status" value="1"/>
</dbReference>
<dbReference type="Gene3D" id="3.10.50.50">
    <property type="entry name" value="Rubella virus capsid protein"/>
    <property type="match status" value="1"/>
</dbReference>
<dbReference type="InterPro" id="IPR008819">
    <property type="entry name" value="Rubella_Capsid"/>
</dbReference>
<dbReference type="InterPro" id="IPR043106">
    <property type="entry name" value="Rubella_Capsid_sf"/>
</dbReference>
<dbReference type="InterPro" id="IPR008820">
    <property type="entry name" value="Rubella_E1"/>
</dbReference>
<dbReference type="InterPro" id="IPR042500">
    <property type="entry name" value="Rubella_E1_1"/>
</dbReference>
<dbReference type="InterPro" id="IPR042498">
    <property type="entry name" value="Rubella_E1_2"/>
</dbReference>
<dbReference type="InterPro" id="IPR042499">
    <property type="entry name" value="Rubella_E1_3"/>
</dbReference>
<dbReference type="InterPro" id="IPR008821">
    <property type="entry name" value="Rubella_E2"/>
</dbReference>
<dbReference type="PANTHER" id="PTHR13037">
    <property type="entry name" value="FORMIN"/>
    <property type="match status" value="1"/>
</dbReference>
<dbReference type="PANTHER" id="PTHR13037:SF24">
    <property type="entry name" value="POLYCOMB PROTEIN PCL-RELATED"/>
    <property type="match status" value="1"/>
</dbReference>
<dbReference type="Pfam" id="PF05750">
    <property type="entry name" value="Rubella_Capsid"/>
    <property type="match status" value="1"/>
</dbReference>
<dbReference type="Pfam" id="PF05748">
    <property type="entry name" value="Rubella_E1"/>
    <property type="match status" value="1"/>
</dbReference>
<dbReference type="Pfam" id="PF05749">
    <property type="entry name" value="Rubella_E2"/>
    <property type="match status" value="1"/>
</dbReference>
<comment type="function">
    <molecule>Capsid protein</molecule>
    <text evidence="3">Capsid protein interacts with genomic RNA and assembles into icosahedric core particles 65-70 nm in diameter. The resulting nucleocapsid eventually associates with the cytoplasmic domain of E2 at the cell membrane, leading to budding and formation of mature virions from host Golgi membranes. Phosphorylation negatively regulates RNA-binding activity, possibly delaying virion assembly during the viral replication phase. Capsid protein dimerizes and becomes disulfide-linked in the virion. Modulates genomic RNA replication. Modulates subgenomic RNA synthesis by interacting with human C1QBP/SF2P32. Induces both perinuclear clustering of mitochondria and the formation of electron-dense intermitochondrial plaques, both hallmarks of rubella virus infected cells. Induces apoptosis when expressed in transfected cells.</text>
</comment>
<comment type="function">
    <molecule>Spike glycoprotein E2</molecule>
    <text evidence="3">Responsible for viral attachment to target host cell, by binding to the cell receptor. Its transport to the plasma membrane depends on interaction with E1 protein. The surface glycoproteins display an irregular helical organization and a pseudo-tetrameric inner nucleocapsid arrangement.</text>
</comment>
<comment type="function">
    <molecule>Spike glycoprotein E1</molecule>
    <text evidence="2 3">Class II viral fusion protein (By similarity). Fusion activity is inactive as long as E1 is bound to E2 in mature virion. After virus attachment to target cell and clathrin-mediated endocytosis, acidification of the endosome would induce dissociation of E1/E2 heterodimer and concomitant trimerization of the E1 subunits (By similarity). This E1 homotrimer is fusion active, and promotes release of viral nucleocapsid in cytoplasm after endosome and viral membrane fusion. The cytoplasmic tail of spike glycoprotein E1 modulates virus release. The surface glycoproteins display an irregular helical organization and a pseudo-tetrameric inner nucleocapsid arrangement (By similarity).</text>
</comment>
<comment type="subunit">
    <molecule>Capsid protein</molecule>
    <text evidence="3">Homodimer; further assembles into homooligomer. Interacts with human C1QBP. Interacts (via N-terminus) with protease/methyltransferase p150.</text>
</comment>
<comment type="subunit">
    <molecule>Spike glycoprotein E1</molecule>
    <text evidence="3">Heterodimer with spike glycoprotein E2.</text>
</comment>
<comment type="subunit">
    <molecule>Spike glycoprotein E2</molecule>
    <text evidence="3">Heterodimer with spike glycoprotein E1.</text>
</comment>
<comment type="subcellular location">
    <molecule>Capsid protein</molecule>
    <subcellularLocation>
        <location evidence="3">Virion</location>
    </subcellularLocation>
    <subcellularLocation>
        <location>Host cytoplasm</location>
    </subcellularLocation>
    <subcellularLocation>
        <location evidence="3">Host mitochondrion</location>
    </subcellularLocation>
    <text evidence="3">The capsid protein is concentrated around Golgi region (By similarity). In the virion, it is probably associated to the viral membrane (By similarity).</text>
</comment>
<comment type="subcellular location">
    <molecule>Spike glycoprotein E2</molecule>
    <subcellularLocation>
        <location evidence="3">Virion membrane</location>
        <topology evidence="3">Single-pass type I membrane protein</topology>
    </subcellularLocation>
    <subcellularLocation>
        <location evidence="3">Host Golgi apparatus membrane</location>
        <topology evidence="3">Single-pass type I membrane protein</topology>
    </subcellularLocation>
    <text evidence="3">E1 and E2 form heterodimer in the endoplasmic reticulum before they are transported to and retained in the Golgi complex, where virus assembly occurs. E1 possesses an endoplasmic reticulum retention signal, and unassembled E2 and E1 subunits are retained in the endoplasmic reticulum. Presumably, assembly of E2 and E1 would mask the signal, thereby allowing transport of the heterodimer to the Golgi complex.</text>
</comment>
<comment type="subcellular location">
    <molecule>Spike glycoprotein E1</molecule>
    <subcellularLocation>
        <location evidence="3">Virion membrane</location>
        <topology evidence="3">Single-pass type I membrane protein</topology>
    </subcellularLocation>
    <subcellularLocation>
        <location evidence="3">Host Golgi apparatus membrane</location>
        <topology evidence="3">Single-pass type I membrane protein</topology>
    </subcellularLocation>
    <text evidence="3">E1 and E2 form heterodimer in the endoplasmic reticulum before they are transported to and retained in the Golgi complex, where virus assembly occurs. E1 possesses an endoplasmic reticulum retention signal, and unassembled E2 and E1 subunits are retained in the endoplasmic reticulum. Presumably, assembly of E2 and E1 would mask the signal, thereby allowing transport of the heterodimer to the Golgi complex.</text>
</comment>
<comment type="domain">
    <text evidence="3">Structural polyprotein: Contains two internal signal peptides that are necessary for directing translocation of the glycoproteins into the lumen of the endoplasmic reticulum.</text>
</comment>
<comment type="domain">
    <molecule>Capsid protein</molecule>
    <text evidence="3">The capsid protein is probably attached to the viral membrane through the E2 signal peptide. This domain is also required for the localization of the capsid protein to the juxtanuclear region and subsequent virus assembly at the Golgi complex.</text>
</comment>
<comment type="PTM">
    <text evidence="3">Structural polyprotein: Specific enzymatic cleavages in vivo yield mature proteins. Two signal peptidase-mediated cleavages within the polyprotein produce the structural proteins capsid, E2, and E1. The E2 signal peptide remains attached to the C-terminus of the capsid protein after cleavage by the signal peptidase. Another signal peptide at E2 C-terminus directs E1 to the ER, with a similar mechanism.</text>
</comment>
<comment type="PTM">
    <molecule>Spike glycoprotein E1</molecule>
    <text evidence="3">Contains three N-linked oligosaccharides.</text>
</comment>
<comment type="PTM">
    <text evidence="1 3">Capsid is phosphorylated on Ser-46 by host. This phosphorylation negatively regulates capsid protein RNA-binding activity (By similarity). Dephosphorylated by human PP1A (By similarity).</text>
</comment>
<comment type="miscellaneous">
    <text evidence="3">Structural polyprotein: Translated from a subgenomic RNA synthesized during togaviruses replication.</text>
</comment>
<comment type="sequence caution" evidence="6">
    <conflict type="miscellaneous discrepancy">
        <sequence resource="EMBL-CDS" id="CAA33016"/>
    </conflict>
    <text>Extreme variation in vaccine RA27/3 lot.</text>
</comment>
<accession>P19725</accession>
<accession>O40956</accession>
<accession>Q86370</accession>
<accession>Q86371</accession>
<accession>Q86372</accession>
<organism>
    <name type="scientific">Rubella virus (strain RA27/3 vaccine)</name>
    <name type="common">RUBV</name>
    <dbReference type="NCBI Taxonomy" id="11044"/>
    <lineage>
        <taxon>Viruses</taxon>
        <taxon>Riboviria</taxon>
        <taxon>Orthornavirae</taxon>
        <taxon>Kitrinoviricota</taxon>
        <taxon>Alsuviricetes</taxon>
        <taxon>Hepelivirales</taxon>
        <taxon>Matonaviridae</taxon>
        <taxon>Rubivirus</taxon>
        <taxon>Rubivirus rubellae</taxon>
    </lineage>
</organism>
<name>POLS_RUBVR</name>